<keyword id="KW-0119">Carbohydrate metabolism</keyword>
<keyword id="KW-0961">Cell wall biogenesis/degradation</keyword>
<keyword id="KW-0325">Glycoprotein</keyword>
<keyword id="KW-0326">Glycosidase</keyword>
<keyword id="KW-0378">Hydrolase</keyword>
<keyword id="KW-0624">Polysaccharide degradation</keyword>
<keyword id="KW-1185">Reference proteome</keyword>
<keyword id="KW-0964">Secreted</keyword>
<keyword id="KW-0732">Signal</keyword>
<reference key="1">
    <citation type="journal article" date="2008" name="PLoS Genet.">
        <title>Genomic islands in the pathogenic filamentous fungus Aspergillus fumigatus.</title>
        <authorList>
            <person name="Fedorova N.D."/>
            <person name="Khaldi N."/>
            <person name="Joardar V.S."/>
            <person name="Maiti R."/>
            <person name="Amedeo P."/>
            <person name="Anderson M.J."/>
            <person name="Crabtree J."/>
            <person name="Silva J.C."/>
            <person name="Badger J.H."/>
            <person name="Albarraq A."/>
            <person name="Angiuoli S."/>
            <person name="Bussey H."/>
            <person name="Bowyer P."/>
            <person name="Cotty P.J."/>
            <person name="Dyer P.S."/>
            <person name="Egan A."/>
            <person name="Galens K."/>
            <person name="Fraser-Liggett C.M."/>
            <person name="Haas B.J."/>
            <person name="Inman J.M."/>
            <person name="Kent R."/>
            <person name="Lemieux S."/>
            <person name="Malavazi I."/>
            <person name="Orvis J."/>
            <person name="Roemer T."/>
            <person name="Ronning C.M."/>
            <person name="Sundaram J.P."/>
            <person name="Sutton G."/>
            <person name="Turner G."/>
            <person name="Venter J.C."/>
            <person name="White O.R."/>
            <person name="Whitty B.R."/>
            <person name="Youngman P."/>
            <person name="Wolfe K.H."/>
            <person name="Goldman G.H."/>
            <person name="Wortman J.R."/>
            <person name="Jiang B."/>
            <person name="Denning D.W."/>
            <person name="Nierman W.C."/>
        </authorList>
    </citation>
    <scope>NUCLEOTIDE SEQUENCE [LARGE SCALE GENOMIC DNA]</scope>
    <source>
        <strain>ATCC 1020 / DSM 3700 / CBS 544.65 / FGSC A1164 / JCM 1740 / NRRL 181 / WB 181</strain>
    </source>
</reference>
<name>GANA_NEOFI</name>
<comment type="function">
    <text evidence="1">Endogalactanase involved in the degradation of plant cell wall polysaccharides, and more particularly of hairy regions of pectin.</text>
</comment>
<comment type="catalytic activity">
    <reaction>
        <text>The enzyme specifically hydrolyzes (1-&gt;4)-beta-D-galactosidic linkages in type I arabinogalactans.</text>
        <dbReference type="EC" id="3.2.1.89"/>
    </reaction>
</comment>
<comment type="subcellular location">
    <subcellularLocation>
        <location evidence="1">Secreted</location>
    </subcellularLocation>
</comment>
<comment type="similarity">
    <text evidence="3">Belongs to the glycosyl hydrolase 53 family.</text>
</comment>
<protein>
    <recommendedName>
        <fullName>Probable arabinogalactan endo-beta-1,4-galactanase A</fullName>
        <ecNumber>3.2.1.89</ecNumber>
    </recommendedName>
    <alternativeName>
        <fullName>Endo-1,4-beta-galactanase A</fullName>
        <shortName>Galactanase A</shortName>
    </alternativeName>
</protein>
<accession>A1D3T4</accession>
<evidence type="ECO:0000250" key="1"/>
<evidence type="ECO:0000255" key="2"/>
<evidence type="ECO:0000305" key="3"/>
<proteinExistence type="inferred from homology"/>
<feature type="signal peptide" evidence="2">
    <location>
        <begin position="1"/>
        <end position="21"/>
    </location>
</feature>
<feature type="chain" id="PRO_0000394952" description="Probable arabinogalactan endo-beta-1,4-galactanase A">
    <location>
        <begin position="22"/>
        <end position="356"/>
    </location>
</feature>
<feature type="active site" description="Proton donor" evidence="1">
    <location>
        <position position="157"/>
    </location>
</feature>
<feature type="active site" description="Nucleophile" evidence="1">
    <location>
        <position position="268"/>
    </location>
</feature>
<feature type="glycosylation site" description="N-linked (GlcNAc...) asparagine" evidence="2">
    <location>
        <position position="133"/>
    </location>
</feature>
<sequence>MLGKMILLPLFVLLCHSLASASLAYRGADISSLLIEEKAGIKYKDVNGQAQPLENILKANGVNSVRQRVWVNPSDGSYNLDYNVKLAKRVKAAGMSVYLDLHFSDTWADPSHQTTPRGWSTNDIGTLTWQVYNYTKEVCDTFASNGIDVSIVAIGNEIRNGLLWPLGKPNNYANIANILHSAAFGVKDSTLSPKPKIMIHLDNGWDWSAQKFFYDSVLSSGAKLVKSDFDLIGVSYYPFYNPSATLSALTTSLKNLRSTYGKDVLVVETDWPVSCPNPAYAFPSDLKDIPFSVAGQKTFVQRVANVVAQTPGGIGLYYWEPAWVQNAALGSSCADNLMVDWRTDQARTSLSVFGTI</sequence>
<organism>
    <name type="scientific">Neosartorya fischeri (strain ATCC 1020 / DSM 3700 / CBS 544.65 / FGSC A1164 / JCM 1740 / NRRL 181 / WB 181)</name>
    <name type="common">Aspergillus fischerianus</name>
    <dbReference type="NCBI Taxonomy" id="331117"/>
    <lineage>
        <taxon>Eukaryota</taxon>
        <taxon>Fungi</taxon>
        <taxon>Dikarya</taxon>
        <taxon>Ascomycota</taxon>
        <taxon>Pezizomycotina</taxon>
        <taxon>Eurotiomycetes</taxon>
        <taxon>Eurotiomycetidae</taxon>
        <taxon>Eurotiales</taxon>
        <taxon>Aspergillaceae</taxon>
        <taxon>Aspergillus</taxon>
        <taxon>Aspergillus subgen. Fumigati</taxon>
    </lineage>
</organism>
<dbReference type="EC" id="3.2.1.89"/>
<dbReference type="EMBL" id="DS027688">
    <property type="protein sequence ID" value="EAW23077.1"/>
    <property type="molecule type" value="Genomic_DNA"/>
</dbReference>
<dbReference type="RefSeq" id="XP_001264974.1">
    <property type="nucleotide sequence ID" value="XM_001264973.1"/>
</dbReference>
<dbReference type="SMR" id="A1D3T4"/>
<dbReference type="STRING" id="331117.A1D3T4"/>
<dbReference type="GlyCosmos" id="A1D3T4">
    <property type="glycosylation" value="1 site, No reported glycans"/>
</dbReference>
<dbReference type="EnsemblFungi" id="EAW23077">
    <property type="protein sequence ID" value="EAW23077"/>
    <property type="gene ID" value="NFIA_017780"/>
</dbReference>
<dbReference type="GeneID" id="4591274"/>
<dbReference type="KEGG" id="nfi:NFIA_017780"/>
<dbReference type="VEuPathDB" id="FungiDB:NFIA_017780"/>
<dbReference type="eggNOG" id="ENOG502QU6R">
    <property type="taxonomic scope" value="Eukaryota"/>
</dbReference>
<dbReference type="HOGENOM" id="CLU_011259_0_0_1"/>
<dbReference type="OMA" id="KYIHDEW"/>
<dbReference type="OrthoDB" id="110914at2759"/>
<dbReference type="Proteomes" id="UP000006702">
    <property type="component" value="Unassembled WGS sequence"/>
</dbReference>
<dbReference type="GO" id="GO:0005576">
    <property type="term" value="C:extracellular region"/>
    <property type="evidence" value="ECO:0000250"/>
    <property type="project" value="UniProtKB"/>
</dbReference>
<dbReference type="GO" id="GO:0031218">
    <property type="term" value="F:arabinogalactan endo-1,4-beta-galactosidase activity"/>
    <property type="evidence" value="ECO:0000250"/>
    <property type="project" value="UniProtKB"/>
</dbReference>
<dbReference type="GO" id="GO:0015926">
    <property type="term" value="F:glucosidase activity"/>
    <property type="evidence" value="ECO:0007669"/>
    <property type="project" value="InterPro"/>
</dbReference>
<dbReference type="GO" id="GO:0071555">
    <property type="term" value="P:cell wall organization"/>
    <property type="evidence" value="ECO:0007669"/>
    <property type="project" value="UniProtKB-KW"/>
</dbReference>
<dbReference type="GO" id="GO:0045490">
    <property type="term" value="P:pectin catabolic process"/>
    <property type="evidence" value="ECO:0000250"/>
    <property type="project" value="UniProtKB"/>
</dbReference>
<dbReference type="FunFam" id="3.20.20.80:FF:000077">
    <property type="entry name" value="Arabinogalactan endo-beta-1,4-galactanase"/>
    <property type="match status" value="1"/>
</dbReference>
<dbReference type="Gene3D" id="3.20.20.80">
    <property type="entry name" value="Glycosidases"/>
    <property type="match status" value="1"/>
</dbReference>
<dbReference type="InterPro" id="IPR011683">
    <property type="entry name" value="Glyco_hydro_53"/>
</dbReference>
<dbReference type="InterPro" id="IPR017853">
    <property type="entry name" value="Glycoside_hydrolase_SF"/>
</dbReference>
<dbReference type="PANTHER" id="PTHR34983">
    <property type="entry name" value="ARABINOGALACTAN ENDO-BETA-1,4-GALACTANASE A"/>
    <property type="match status" value="1"/>
</dbReference>
<dbReference type="PANTHER" id="PTHR34983:SF1">
    <property type="entry name" value="ARABINOGALACTAN ENDO-BETA-1,4-GALACTANASE A"/>
    <property type="match status" value="1"/>
</dbReference>
<dbReference type="Pfam" id="PF07745">
    <property type="entry name" value="Glyco_hydro_53"/>
    <property type="match status" value="1"/>
</dbReference>
<dbReference type="SUPFAM" id="SSF51445">
    <property type="entry name" value="(Trans)glycosidases"/>
    <property type="match status" value="1"/>
</dbReference>
<gene>
    <name type="primary">galA</name>
    <name type="ORF">NFIA_017780</name>
</gene>